<proteinExistence type="inferred from homology"/>
<feature type="chain" id="PRO_1000145222" description="Urease accessory protein UreG">
    <location>
        <begin position="1"/>
        <end position="204"/>
    </location>
</feature>
<feature type="binding site" evidence="1">
    <location>
        <begin position="11"/>
        <end position="18"/>
    </location>
    <ligand>
        <name>GTP</name>
        <dbReference type="ChEBI" id="CHEBI:37565"/>
    </ligand>
</feature>
<sequence>MANPIKIGIGGPVGAGKTQLIEKVVKRLSKEMSIGVITNDIYTKEDEKILVNSGVLPESRIIGVETGGCPHTAIREDASMNFAAIDELLERHDDIELIFIESGGDNLAATFSPELVDFSIYIIDVAQGEKIPRKGGQGMIKSDFFVINKTDLAPYVGASLEQMAEDTKVFRGKRPFTFTNLKTDEGLDEVIDWIERDTLLKGLS</sequence>
<gene>
    <name evidence="1" type="primary">ureG</name>
    <name type="ordered locus">SAHV_2277</name>
</gene>
<accession>A7X5M7</accession>
<dbReference type="EMBL" id="AP009324">
    <property type="protein sequence ID" value="BAF79160.1"/>
    <property type="molecule type" value="Genomic_DNA"/>
</dbReference>
<dbReference type="RefSeq" id="WP_000002973.1">
    <property type="nucleotide sequence ID" value="NZ_CTYB01000019.1"/>
</dbReference>
<dbReference type="SMR" id="A7X5M7"/>
<dbReference type="KEGG" id="saw:SAHV_2277"/>
<dbReference type="HOGENOM" id="CLU_072144_1_0_9"/>
<dbReference type="GO" id="GO:0005737">
    <property type="term" value="C:cytoplasm"/>
    <property type="evidence" value="ECO:0007669"/>
    <property type="project" value="UniProtKB-SubCell"/>
</dbReference>
<dbReference type="GO" id="GO:0005525">
    <property type="term" value="F:GTP binding"/>
    <property type="evidence" value="ECO:0007669"/>
    <property type="project" value="UniProtKB-KW"/>
</dbReference>
<dbReference type="GO" id="GO:0003924">
    <property type="term" value="F:GTPase activity"/>
    <property type="evidence" value="ECO:0007669"/>
    <property type="project" value="InterPro"/>
</dbReference>
<dbReference type="GO" id="GO:0016151">
    <property type="term" value="F:nickel cation binding"/>
    <property type="evidence" value="ECO:0007669"/>
    <property type="project" value="UniProtKB-UniRule"/>
</dbReference>
<dbReference type="GO" id="GO:0043419">
    <property type="term" value="P:urea catabolic process"/>
    <property type="evidence" value="ECO:0007669"/>
    <property type="project" value="InterPro"/>
</dbReference>
<dbReference type="CDD" id="cd05540">
    <property type="entry name" value="UreG"/>
    <property type="match status" value="1"/>
</dbReference>
<dbReference type="Gene3D" id="3.40.50.300">
    <property type="entry name" value="P-loop containing nucleotide triphosphate hydrolases"/>
    <property type="match status" value="1"/>
</dbReference>
<dbReference type="HAMAP" id="MF_01389">
    <property type="entry name" value="UreG"/>
    <property type="match status" value="1"/>
</dbReference>
<dbReference type="InterPro" id="IPR003495">
    <property type="entry name" value="CobW/HypB/UreG_nucleotide-bd"/>
</dbReference>
<dbReference type="InterPro" id="IPR027417">
    <property type="entry name" value="P-loop_NTPase"/>
</dbReference>
<dbReference type="InterPro" id="IPR004400">
    <property type="entry name" value="UreG"/>
</dbReference>
<dbReference type="NCBIfam" id="TIGR00101">
    <property type="entry name" value="ureG"/>
    <property type="match status" value="1"/>
</dbReference>
<dbReference type="PANTHER" id="PTHR31715">
    <property type="entry name" value="UREASE ACCESSORY PROTEIN G"/>
    <property type="match status" value="1"/>
</dbReference>
<dbReference type="PANTHER" id="PTHR31715:SF0">
    <property type="entry name" value="UREASE ACCESSORY PROTEIN G"/>
    <property type="match status" value="1"/>
</dbReference>
<dbReference type="Pfam" id="PF02492">
    <property type="entry name" value="cobW"/>
    <property type="match status" value="1"/>
</dbReference>
<dbReference type="PIRSF" id="PIRSF005624">
    <property type="entry name" value="Ni-bind_GTPase"/>
    <property type="match status" value="1"/>
</dbReference>
<dbReference type="SUPFAM" id="SSF52540">
    <property type="entry name" value="P-loop containing nucleoside triphosphate hydrolases"/>
    <property type="match status" value="1"/>
</dbReference>
<evidence type="ECO:0000255" key="1">
    <source>
        <dbReference type="HAMAP-Rule" id="MF_01389"/>
    </source>
</evidence>
<comment type="function">
    <text evidence="1">Facilitates the functional incorporation of the urease nickel metallocenter. This process requires GTP hydrolysis, probably effectuated by UreG.</text>
</comment>
<comment type="subunit">
    <text evidence="1">Homodimer. UreD, UreF and UreG form a complex that acts as a GTP-hydrolysis-dependent molecular chaperone, activating the urease apoprotein by helping to assemble the nickel containing metallocenter of UreC. The UreE protein probably delivers the nickel.</text>
</comment>
<comment type="subcellular location">
    <subcellularLocation>
        <location evidence="1">Cytoplasm</location>
    </subcellularLocation>
</comment>
<comment type="similarity">
    <text evidence="1">Belongs to the SIMIBI class G3E GTPase family. UreG subfamily.</text>
</comment>
<reference key="1">
    <citation type="journal article" date="2008" name="Antimicrob. Agents Chemother.">
        <title>Mutated response regulator graR is responsible for phenotypic conversion of Staphylococcus aureus from heterogeneous vancomycin-intermediate resistance to vancomycin-intermediate resistance.</title>
        <authorList>
            <person name="Neoh H.-M."/>
            <person name="Cui L."/>
            <person name="Yuzawa H."/>
            <person name="Takeuchi F."/>
            <person name="Matsuo M."/>
            <person name="Hiramatsu K."/>
        </authorList>
    </citation>
    <scope>NUCLEOTIDE SEQUENCE [LARGE SCALE GENOMIC DNA]</scope>
    <source>
        <strain>Mu3 / ATCC 700698</strain>
    </source>
</reference>
<protein>
    <recommendedName>
        <fullName evidence="1">Urease accessory protein UreG</fullName>
    </recommendedName>
</protein>
<keyword id="KW-0143">Chaperone</keyword>
<keyword id="KW-0963">Cytoplasm</keyword>
<keyword id="KW-0342">GTP-binding</keyword>
<keyword id="KW-0996">Nickel insertion</keyword>
<keyword id="KW-0547">Nucleotide-binding</keyword>
<organism>
    <name type="scientific">Staphylococcus aureus (strain Mu3 / ATCC 700698)</name>
    <dbReference type="NCBI Taxonomy" id="418127"/>
    <lineage>
        <taxon>Bacteria</taxon>
        <taxon>Bacillati</taxon>
        <taxon>Bacillota</taxon>
        <taxon>Bacilli</taxon>
        <taxon>Bacillales</taxon>
        <taxon>Staphylococcaceae</taxon>
        <taxon>Staphylococcus</taxon>
    </lineage>
</organism>
<name>UREG_STAA1</name>